<gene>
    <name evidence="14" type="primary">bub1</name>
    <name evidence="16" type="ORF">SPCC1322.12c</name>
</gene>
<dbReference type="EC" id="2.7.11.1" evidence="3"/>
<dbReference type="EMBL" id="AF064796">
    <property type="protein sequence ID" value="AAC98348.1"/>
    <property type="molecule type" value="Genomic_DNA"/>
</dbReference>
<dbReference type="EMBL" id="CU329672">
    <property type="protein sequence ID" value="CAA22865.1"/>
    <property type="molecule type" value="Genomic_DNA"/>
</dbReference>
<dbReference type="PIR" id="T43800">
    <property type="entry name" value="T43800"/>
</dbReference>
<dbReference type="RefSeq" id="NP_588140.1">
    <property type="nucleotide sequence ID" value="NM_001023130.2"/>
</dbReference>
<dbReference type="SMR" id="O94751"/>
<dbReference type="BioGRID" id="275320">
    <property type="interactions" value="53"/>
</dbReference>
<dbReference type="DIP" id="DIP-37961N"/>
<dbReference type="FunCoup" id="O94751">
    <property type="interactions" value="217"/>
</dbReference>
<dbReference type="IntAct" id="O94751">
    <property type="interactions" value="6"/>
</dbReference>
<dbReference type="STRING" id="284812.O94751"/>
<dbReference type="iPTMnet" id="O94751"/>
<dbReference type="PaxDb" id="4896-SPCC1322.12c.1"/>
<dbReference type="EnsemblFungi" id="SPCC1322.12c.1">
    <property type="protein sequence ID" value="SPCC1322.12c.1:pep"/>
    <property type="gene ID" value="SPCC1322.12c"/>
</dbReference>
<dbReference type="GeneID" id="2538736"/>
<dbReference type="KEGG" id="spo:2538736"/>
<dbReference type="PomBase" id="SPCC1322.12c">
    <property type="gene designation" value="bub1"/>
</dbReference>
<dbReference type="VEuPathDB" id="FungiDB:SPCC1322.12c"/>
<dbReference type="eggNOG" id="KOG1166">
    <property type="taxonomic scope" value="Eukaryota"/>
</dbReference>
<dbReference type="HOGENOM" id="CLU_002115_1_0_1"/>
<dbReference type="InParanoid" id="O94751"/>
<dbReference type="PhylomeDB" id="O94751"/>
<dbReference type="BRENDA" id="2.7.11.1">
    <property type="organism ID" value="5613"/>
</dbReference>
<dbReference type="Reactome" id="R-SPO-141430">
    <property type="pathway name" value="Inactivation of APC/C via direct inhibition of the APC/C complex"/>
</dbReference>
<dbReference type="PRO" id="PR:O94751"/>
<dbReference type="Proteomes" id="UP000002485">
    <property type="component" value="Chromosome III"/>
</dbReference>
<dbReference type="GO" id="GO:1990298">
    <property type="term" value="C:bub1-bub3 complex"/>
    <property type="evidence" value="ECO:0000315"/>
    <property type="project" value="PomBase"/>
</dbReference>
<dbReference type="GO" id="GO:0034506">
    <property type="term" value="C:chromosome, centromeric core domain"/>
    <property type="evidence" value="ECO:0000314"/>
    <property type="project" value="PomBase"/>
</dbReference>
<dbReference type="GO" id="GO:0000775">
    <property type="term" value="C:chromosome, centromeric region"/>
    <property type="evidence" value="ECO:0000314"/>
    <property type="project" value="PomBase"/>
</dbReference>
<dbReference type="GO" id="GO:0000939">
    <property type="term" value="C:inner kinetochore"/>
    <property type="evidence" value="ECO:0000269"/>
    <property type="project" value="PomBase"/>
</dbReference>
<dbReference type="GO" id="GO:0000776">
    <property type="term" value="C:kinetochore"/>
    <property type="evidence" value="ECO:0000314"/>
    <property type="project" value="PomBase"/>
</dbReference>
<dbReference type="GO" id="GO:0044732">
    <property type="term" value="C:mitotic spindle pole body"/>
    <property type="evidence" value="ECO:0000314"/>
    <property type="project" value="PomBase"/>
</dbReference>
<dbReference type="GO" id="GO:0005634">
    <property type="term" value="C:nucleus"/>
    <property type="evidence" value="ECO:0000314"/>
    <property type="project" value="PomBase"/>
</dbReference>
<dbReference type="GO" id="GO:0071957">
    <property type="term" value="C:old mitotic spindle pole body"/>
    <property type="evidence" value="ECO:0000314"/>
    <property type="project" value="PomBase"/>
</dbReference>
<dbReference type="GO" id="GO:0000940">
    <property type="term" value="C:outer kinetochore"/>
    <property type="evidence" value="ECO:0000250"/>
    <property type="project" value="UniProtKB"/>
</dbReference>
<dbReference type="GO" id="GO:0005524">
    <property type="term" value="F:ATP binding"/>
    <property type="evidence" value="ECO:0007669"/>
    <property type="project" value="UniProtKB-KW"/>
</dbReference>
<dbReference type="GO" id="GO:0072371">
    <property type="term" value="F:histone H2AS121 kinase activity"/>
    <property type="evidence" value="ECO:0000314"/>
    <property type="project" value="PomBase"/>
</dbReference>
<dbReference type="GO" id="GO:0042802">
    <property type="term" value="F:identical protein binding"/>
    <property type="evidence" value="ECO:0000353"/>
    <property type="project" value="IntAct"/>
</dbReference>
<dbReference type="GO" id="GO:0004672">
    <property type="term" value="F:protein kinase activity"/>
    <property type="evidence" value="ECO:0000250"/>
    <property type="project" value="UniProtKB"/>
</dbReference>
<dbReference type="GO" id="GO:0106310">
    <property type="term" value="F:protein serine kinase activity"/>
    <property type="evidence" value="ECO:0007669"/>
    <property type="project" value="RHEA"/>
</dbReference>
<dbReference type="GO" id="GO:0004674">
    <property type="term" value="F:protein serine/threonine kinase activity"/>
    <property type="evidence" value="ECO:0000314"/>
    <property type="project" value="PomBase"/>
</dbReference>
<dbReference type="GO" id="GO:0051301">
    <property type="term" value="P:cell division"/>
    <property type="evidence" value="ECO:0007669"/>
    <property type="project" value="UniProtKB-KW"/>
</dbReference>
<dbReference type="GO" id="GO:0045143">
    <property type="term" value="P:homologous chromosome segregation"/>
    <property type="evidence" value="ECO:0000315"/>
    <property type="project" value="PomBase"/>
</dbReference>
<dbReference type="GO" id="GO:1905318">
    <property type="term" value="P:meiosis I spindle assembly checkpoint signaling"/>
    <property type="evidence" value="ECO:0000315"/>
    <property type="project" value="PomBase"/>
</dbReference>
<dbReference type="GO" id="GO:1990813">
    <property type="term" value="P:meiotic centromeric cohesion protection in anaphase I"/>
    <property type="evidence" value="ECO:0000315"/>
    <property type="project" value="PomBase"/>
</dbReference>
<dbReference type="GO" id="GO:0051754">
    <property type="term" value="P:meiotic sister chromatid cohesion, centromeric"/>
    <property type="evidence" value="ECO:0000318"/>
    <property type="project" value="GO_Central"/>
</dbReference>
<dbReference type="GO" id="GO:1990758">
    <property type="term" value="P:mitotic sister chromatid biorientation"/>
    <property type="evidence" value="ECO:0000315"/>
    <property type="project" value="PomBase"/>
</dbReference>
<dbReference type="GO" id="GO:0007094">
    <property type="term" value="P:mitotic spindle assembly checkpoint signaling"/>
    <property type="evidence" value="ECO:0000315"/>
    <property type="project" value="PomBase"/>
</dbReference>
<dbReference type="CDD" id="cd13981">
    <property type="entry name" value="STKc_Bub1_BubR1"/>
    <property type="match status" value="1"/>
</dbReference>
<dbReference type="Gene3D" id="1.25.40.430">
    <property type="match status" value="1"/>
</dbReference>
<dbReference type="Gene3D" id="1.10.510.10">
    <property type="entry name" value="Transferase(Phosphotransferase) domain 1"/>
    <property type="match status" value="1"/>
</dbReference>
<dbReference type="InterPro" id="IPR015661">
    <property type="entry name" value="Bub1/Mad3"/>
</dbReference>
<dbReference type="InterPro" id="IPR011009">
    <property type="entry name" value="Kinase-like_dom_sf"/>
</dbReference>
<dbReference type="InterPro" id="IPR013212">
    <property type="entry name" value="Mad3/Bub1_I"/>
</dbReference>
<dbReference type="InterPro" id="IPR000719">
    <property type="entry name" value="Prot_kinase_dom"/>
</dbReference>
<dbReference type="PANTHER" id="PTHR14030:SF4">
    <property type="entry name" value="BUB1 KINASE, ISOFORM A-RELATED"/>
    <property type="match status" value="1"/>
</dbReference>
<dbReference type="PANTHER" id="PTHR14030">
    <property type="entry name" value="MITOTIC CHECKPOINT SERINE/THREONINE-PROTEIN KINASE BUB1"/>
    <property type="match status" value="1"/>
</dbReference>
<dbReference type="Pfam" id="PF08311">
    <property type="entry name" value="Mad3_BUB1_I"/>
    <property type="match status" value="1"/>
</dbReference>
<dbReference type="Pfam" id="PF00069">
    <property type="entry name" value="Pkinase"/>
    <property type="match status" value="1"/>
</dbReference>
<dbReference type="SMART" id="SM00777">
    <property type="entry name" value="Mad3_BUB1_I"/>
    <property type="match status" value="1"/>
</dbReference>
<dbReference type="SMART" id="SM00220">
    <property type="entry name" value="S_TKc"/>
    <property type="match status" value="1"/>
</dbReference>
<dbReference type="SUPFAM" id="SSF56112">
    <property type="entry name" value="Protein kinase-like (PK-like)"/>
    <property type="match status" value="1"/>
</dbReference>
<dbReference type="PROSITE" id="PS51489">
    <property type="entry name" value="BUB1_N"/>
    <property type="match status" value="1"/>
</dbReference>
<dbReference type="PROSITE" id="PS50011">
    <property type="entry name" value="PROTEIN_KINASE_DOM"/>
    <property type="match status" value="1"/>
</dbReference>
<evidence type="ECO:0000250" key="1"/>
<evidence type="ECO:0000250" key="2">
    <source>
        <dbReference type="UniProtKB" id="O43683"/>
    </source>
</evidence>
<evidence type="ECO:0000250" key="3">
    <source>
        <dbReference type="UniProtKB" id="P41695"/>
    </source>
</evidence>
<evidence type="ECO:0000255" key="4">
    <source>
        <dbReference type="PROSITE-ProRule" id="PRU00159"/>
    </source>
</evidence>
<evidence type="ECO:0000255" key="5">
    <source>
        <dbReference type="PROSITE-ProRule" id="PRU00822"/>
    </source>
</evidence>
<evidence type="ECO:0000256" key="6">
    <source>
        <dbReference type="SAM" id="MobiDB-lite"/>
    </source>
</evidence>
<evidence type="ECO:0000269" key="7">
    <source>
    </source>
</evidence>
<evidence type="ECO:0000269" key="8">
    <source>
    </source>
</evidence>
<evidence type="ECO:0000269" key="9">
    <source>
    </source>
</evidence>
<evidence type="ECO:0000269" key="10">
    <source>
    </source>
</evidence>
<evidence type="ECO:0000269" key="11">
    <source>
    </source>
</evidence>
<evidence type="ECO:0000269" key="12">
    <source>
    </source>
</evidence>
<evidence type="ECO:0000269" key="13">
    <source>
    </source>
</evidence>
<evidence type="ECO:0000303" key="14">
    <source>
    </source>
</evidence>
<evidence type="ECO:0000305" key="15"/>
<evidence type="ECO:0000312" key="16">
    <source>
        <dbReference type="PomBase" id="SPCC1322.12c"/>
    </source>
</evidence>
<name>BUB1_SCHPO</name>
<keyword id="KW-0067">ATP-binding</keyword>
<keyword id="KW-0131">Cell cycle</keyword>
<keyword id="KW-0132">Cell division</keyword>
<keyword id="KW-0137">Centromere</keyword>
<keyword id="KW-0158">Chromosome</keyword>
<keyword id="KW-0159">Chromosome partition</keyword>
<keyword id="KW-0418">Kinase</keyword>
<keyword id="KW-0995">Kinetochore</keyword>
<keyword id="KW-0498">Mitosis</keyword>
<keyword id="KW-0547">Nucleotide-binding</keyword>
<keyword id="KW-0539">Nucleus</keyword>
<keyword id="KW-0597">Phosphoprotein</keyword>
<keyword id="KW-1185">Reference proteome</keyword>
<keyword id="KW-0723">Serine/threonine-protein kinase</keyword>
<keyword id="KW-0808">Transferase</keyword>
<protein>
    <recommendedName>
        <fullName evidence="15">Spindle assembly checkpoint serine/threonine-protein kinase bub1</fullName>
        <ecNumber evidence="3">2.7.11.1</ecNumber>
    </recommendedName>
    <alternativeName>
        <fullName>Checkpoint serine/threonine-protein kinase bub1</fullName>
    </alternativeName>
</protein>
<sequence>MSDWRLTENVLDQNIPETKPRESKTRLEEIQRLALFQEELDIIEELDDPVDVWYRCIEWLLETRFLGMETVNKMLDDAIQYLERCRFALNDVRHLLIQLAKIKQSYETPDELQQAAKQFYQLASKGIGLELALFYEEYGSLLIRMQRWKEASEVFHAAVSREARPLVRLLRNAAEFSRAYDLHNAHPSIHDAPYSSPFPPPRIVLGSKPVSSSTLPSKPKSFQVFSDASSSRDSQNASDLPQAKSLESEANTPNLPLLYDKSSGKRVEYSAFNFLALYENGEERSMEECRAQRYLSSIQPNTAASFPKVVPKNEISVHHDSSSSNVSPIYKNPVAEQSDTPTRSLPKNYAYVAKSTSPELKVFDTVMPVALSPKPAQKPPSPTIHTKAALADILDIFNQPLRSESLEKSSKSPISAQSSYLGTPLKNDENSSNSGATSLTGRSQEEHLDFIPSLTPSKNYPSKIYSPNKNLDFSHTASKAETYKNSNELENVKREQPFSELLPSTLQEETATGTTSTTFANAKRRPEDSNISPTNPKKLHTLPRSPQYSTVDSNSVLSPAMPKGYMFVNENQSMKHESSVSNPVATIPHENGKHDFGQLSPIEHKPFFPKNDDELPGPSGYLTMPYEEAMASLSNLPTLINPLDQSLRDLLFQVLRPSLLRDKDYHEHETSFALVEHIESFVSKIKPKAGGPGRRRSSNRHSLDGPEFHLFYPPNTNLSVISKLGQGAFAPVYLVKSKIETENGDVSQGGAENNESKLFALKIETPPSCFEFYLTRQAMTRLKGLRETNSILPVHQLHMFHDTSHLLMDYRPQGSILDLVNSMHNSTFSSSGMDEILVVFFSIEFLRIIEALHTHKIIHGDLKADNALLRLETVADSEWSPIYSPEGLYGWSFKGIYLIDFGRGIDLSLFEEKVKFIADWDTDLQDCIEMREGRPWTYQIDYHGLAAIIYTMLFGQYIETRIEVINGQRRQVLTQRMKRYWNQDLWHRLFDLLLNPTLHVSEENLPMTEELSKIRIEMEEWLVNHSTGGSGLKGLLKSIEKRKI</sequence>
<reference key="1">
    <citation type="journal article" date="1998" name="J. Cell Biol.">
        <title>Fission yeast Bub1 is a mitotic centromere protein essential for the spindle checkpoint and the preservation of correct ploidy through mitosis.</title>
        <authorList>
            <person name="Bernard P."/>
            <person name="Hardwick K.G."/>
            <person name="Javerzat J.-P."/>
        </authorList>
    </citation>
    <scope>NUCLEOTIDE SEQUENCE [GENOMIC DNA]</scope>
    <scope>FUNCTION</scope>
    <scope>SUBCELLULAR LOCATION</scope>
    <source>
        <strain>SP011</strain>
    </source>
</reference>
<reference key="2">
    <citation type="journal article" date="2002" name="Nature">
        <title>The genome sequence of Schizosaccharomyces pombe.</title>
        <authorList>
            <person name="Wood V."/>
            <person name="Gwilliam R."/>
            <person name="Rajandream M.A."/>
            <person name="Lyne M.H."/>
            <person name="Lyne R."/>
            <person name="Stewart A."/>
            <person name="Sgouros J.G."/>
            <person name="Peat N."/>
            <person name="Hayles J."/>
            <person name="Baker S.G."/>
            <person name="Basham D."/>
            <person name="Bowman S."/>
            <person name="Brooks K."/>
            <person name="Brown D."/>
            <person name="Brown S."/>
            <person name="Chillingworth T."/>
            <person name="Churcher C.M."/>
            <person name="Collins M."/>
            <person name="Connor R."/>
            <person name="Cronin A."/>
            <person name="Davis P."/>
            <person name="Feltwell T."/>
            <person name="Fraser A."/>
            <person name="Gentles S."/>
            <person name="Goble A."/>
            <person name="Hamlin N."/>
            <person name="Harris D.E."/>
            <person name="Hidalgo J."/>
            <person name="Hodgson G."/>
            <person name="Holroyd S."/>
            <person name="Hornsby T."/>
            <person name="Howarth S."/>
            <person name="Huckle E.J."/>
            <person name="Hunt S."/>
            <person name="Jagels K."/>
            <person name="James K.D."/>
            <person name="Jones L."/>
            <person name="Jones M."/>
            <person name="Leather S."/>
            <person name="McDonald S."/>
            <person name="McLean J."/>
            <person name="Mooney P."/>
            <person name="Moule S."/>
            <person name="Mungall K.L."/>
            <person name="Murphy L.D."/>
            <person name="Niblett D."/>
            <person name="Odell C."/>
            <person name="Oliver K."/>
            <person name="O'Neil S."/>
            <person name="Pearson D."/>
            <person name="Quail M.A."/>
            <person name="Rabbinowitsch E."/>
            <person name="Rutherford K.M."/>
            <person name="Rutter S."/>
            <person name="Saunders D."/>
            <person name="Seeger K."/>
            <person name="Sharp S."/>
            <person name="Skelton J."/>
            <person name="Simmonds M.N."/>
            <person name="Squares R."/>
            <person name="Squares S."/>
            <person name="Stevens K."/>
            <person name="Taylor K."/>
            <person name="Taylor R.G."/>
            <person name="Tivey A."/>
            <person name="Walsh S.V."/>
            <person name="Warren T."/>
            <person name="Whitehead S."/>
            <person name="Woodward J.R."/>
            <person name="Volckaert G."/>
            <person name="Aert R."/>
            <person name="Robben J."/>
            <person name="Grymonprez B."/>
            <person name="Weltjens I."/>
            <person name="Vanstreels E."/>
            <person name="Rieger M."/>
            <person name="Schaefer M."/>
            <person name="Mueller-Auer S."/>
            <person name="Gabel C."/>
            <person name="Fuchs M."/>
            <person name="Duesterhoeft A."/>
            <person name="Fritzc C."/>
            <person name="Holzer E."/>
            <person name="Moestl D."/>
            <person name="Hilbert H."/>
            <person name="Borzym K."/>
            <person name="Langer I."/>
            <person name="Beck A."/>
            <person name="Lehrach H."/>
            <person name="Reinhardt R."/>
            <person name="Pohl T.M."/>
            <person name="Eger P."/>
            <person name="Zimmermann W."/>
            <person name="Wedler H."/>
            <person name="Wambutt R."/>
            <person name="Purnelle B."/>
            <person name="Goffeau A."/>
            <person name="Cadieu E."/>
            <person name="Dreano S."/>
            <person name="Gloux S."/>
            <person name="Lelaure V."/>
            <person name="Mottier S."/>
            <person name="Galibert F."/>
            <person name="Aves S.J."/>
            <person name="Xiang Z."/>
            <person name="Hunt C."/>
            <person name="Moore K."/>
            <person name="Hurst S.M."/>
            <person name="Lucas M."/>
            <person name="Rochet M."/>
            <person name="Gaillardin C."/>
            <person name="Tallada V.A."/>
            <person name="Garzon A."/>
            <person name="Thode G."/>
            <person name="Daga R.R."/>
            <person name="Cruzado L."/>
            <person name="Jimenez J."/>
            <person name="Sanchez M."/>
            <person name="del Rey F."/>
            <person name="Benito J."/>
            <person name="Dominguez A."/>
            <person name="Revuelta J.L."/>
            <person name="Moreno S."/>
            <person name="Armstrong J."/>
            <person name="Forsburg S.L."/>
            <person name="Cerutti L."/>
            <person name="Lowe T."/>
            <person name="McCombie W.R."/>
            <person name="Paulsen I."/>
            <person name="Potashkin J."/>
            <person name="Shpakovski G.V."/>
            <person name="Ussery D."/>
            <person name="Barrell B.G."/>
            <person name="Nurse P."/>
        </authorList>
    </citation>
    <scope>NUCLEOTIDE SEQUENCE [LARGE SCALE GENOMIC DNA]</scope>
    <source>
        <strain>972 / ATCC 24843</strain>
    </source>
</reference>
<reference key="3">
    <citation type="journal article" date="2004" name="Mol. Cell. Biol.">
        <title>Kinetochore targeting of fission yeast Mad and Bub proteins is essential for spindle checkpoint function but not for all chromosome segregation roles of Bub1p.</title>
        <authorList>
            <person name="Vanoosthuyse V."/>
            <person name="Valsdottir R."/>
            <person name="Javerzat J.-P."/>
            <person name="Hardwick K.G."/>
        </authorList>
    </citation>
    <scope>FUNCTION</scope>
    <scope>INTERACTION WITH BUB3 AND MAD3</scope>
    <scope>SUBCELLULAR LOCATION</scope>
</reference>
<reference key="4">
    <citation type="journal article" date="2005" name="Mol. Biol. Cell">
        <title>The A78V mutation in the Mad3-like domain of Schizosaccharomyces pombe Bub1p perturbs nuclear accumulation and kinetochore targeting of Bub1p, Bub3p, and Mad3p and spindle assembly checkpoint function.</title>
        <authorList>
            <person name="Kadura S."/>
            <person name="He X."/>
            <person name="Vanoosthuyse V."/>
            <person name="Hardwick K.G."/>
            <person name="Sazer S."/>
        </authorList>
    </citation>
    <scope>FUNCTION</scope>
    <scope>SUBCELLULAR LOCATION</scope>
    <scope>MUTAGENESIS OF ALA-78</scope>
</reference>
<reference key="5">
    <citation type="journal article" date="2008" name="J. Proteome Res.">
        <title>Phosphoproteome analysis of fission yeast.</title>
        <authorList>
            <person name="Wilson-Grady J.T."/>
            <person name="Villen J."/>
            <person name="Gygi S.P."/>
        </authorList>
    </citation>
    <scope>PHOSPHORYLATION [LARGE SCALE ANALYSIS] AT THR-550</scope>
    <scope>IDENTIFICATION BY MASS SPECTROMETRY</scope>
</reference>
<reference key="6">
    <citation type="journal article" date="2012" name="Curr. Biol.">
        <title>Phosphodependent recruitment of Bub1 and Bub3 to Spc7/KNL1 by Mph1 kinase maintains the spindle checkpoint.</title>
        <authorList>
            <person name="Shepperd L.A."/>
            <person name="Meadows J.C."/>
            <person name="Sochaj A.M."/>
            <person name="Lancaster T.C."/>
            <person name="Zou J."/>
            <person name="Buttrick G.J."/>
            <person name="Rappsilber J."/>
            <person name="Hardwick K.G."/>
            <person name="Millar J.B."/>
        </authorList>
    </citation>
    <scope>IDENTIFICATION IN THE BUB1-BUB3 COMPLEX</scope>
    <scope>INTERACTION WITH SPC7</scope>
    <scope>SUBCELLULAR LOCATION</scope>
    <scope>DISRUPTION PHENOTYPE</scope>
</reference>
<reference key="7">
    <citation type="journal article" date="2012" name="Nat. Cell Biol.">
        <title>MPS1/Mph1 phosphorylates the kinetochore protein KNL1/Spc7 to recruit SAC components.</title>
        <authorList>
            <person name="Yamagishi Y."/>
            <person name="Yang C.H."/>
            <person name="Tanno Y."/>
            <person name="Watanabe Y."/>
        </authorList>
    </citation>
    <scope>FUNCTION</scope>
    <scope>IDENTIFICATION IN THE BUB1-BUB3 COMPLEX</scope>
    <scope>INTERACTION WITH SPC7</scope>
    <scope>SUBCELLULAR LOCATION</scope>
    <scope>DISRUPTION PHENOTYPE</scope>
</reference>
<reference key="8">
    <citation type="journal article" date="2017" name="J. Cell Biol.">
        <title>The fission yeast nucleoporin Alm1 is required for proteasomal degradation of kinetochore components.</title>
        <authorList>
            <person name="Salas-Pino S."/>
            <person name="Gallardo P."/>
            <person name="Barrales R.R."/>
            <person name="Braun S."/>
            <person name="Daga R.R."/>
        </authorList>
    </citation>
    <scope>DISRUPTION PHENOTYPE</scope>
</reference>
<comment type="function">
    <text evidence="7 8 11 13">Involved in mitotic spindle assembly checkpoint signaling, a process that delays anaphase until chromosomes are bioriented on the spindle, and in the repair of incorrect mitotic kinetochore-spindle microtubule attachments (PubMed:15509783, PubMed:15525673, PubMed:22660415, PubMed:9864354). Acts as a kinetochore scaffold for the recruitment of other spindle assembly checkpoint components (PubMed:15509783, PubMed:15525673, PubMed:22660415).</text>
</comment>
<comment type="catalytic activity">
    <reaction evidence="3">
        <text>L-seryl-[protein] + ATP = O-phospho-L-seryl-[protein] + ADP + H(+)</text>
        <dbReference type="Rhea" id="RHEA:17989"/>
        <dbReference type="Rhea" id="RHEA-COMP:9863"/>
        <dbReference type="Rhea" id="RHEA-COMP:11604"/>
        <dbReference type="ChEBI" id="CHEBI:15378"/>
        <dbReference type="ChEBI" id="CHEBI:29999"/>
        <dbReference type="ChEBI" id="CHEBI:30616"/>
        <dbReference type="ChEBI" id="CHEBI:83421"/>
        <dbReference type="ChEBI" id="CHEBI:456216"/>
        <dbReference type="EC" id="2.7.11.1"/>
    </reaction>
</comment>
<comment type="catalytic activity">
    <reaction evidence="3">
        <text>L-threonyl-[protein] + ATP = O-phospho-L-threonyl-[protein] + ADP + H(+)</text>
        <dbReference type="Rhea" id="RHEA:46608"/>
        <dbReference type="Rhea" id="RHEA-COMP:11060"/>
        <dbReference type="Rhea" id="RHEA-COMP:11605"/>
        <dbReference type="ChEBI" id="CHEBI:15378"/>
        <dbReference type="ChEBI" id="CHEBI:30013"/>
        <dbReference type="ChEBI" id="CHEBI:30616"/>
        <dbReference type="ChEBI" id="CHEBI:61977"/>
        <dbReference type="ChEBI" id="CHEBI:456216"/>
        <dbReference type="EC" id="2.7.11.1"/>
    </reaction>
</comment>
<comment type="subunit">
    <text evidence="7 10 11">Part of the BUB1-BUB3 complex, composed of bub1 and bub3 (PubMed:15509783, PubMed:22521786, PubMed:22660415). Interacts with spc7 (when phosphorylated on MELT motifs); to recruit the bub1-bub3 complex to kinetochores (PubMed:22521786, PubMed:22660415). Interacts with mad3 (PubMed:15509783).</text>
</comment>
<comment type="interaction">
    <interactant intactId="EBI-1002539">
        <id>O94751</id>
    </interactant>
    <interactant intactId="EBI-1002539">
        <id>O94751</id>
        <label>bub1</label>
    </interactant>
    <organismsDiffer>false</organismsDiffer>
    <experiments>2</experiments>
</comment>
<comment type="subcellular location">
    <subcellularLocation>
        <location evidence="7 8 10 11 13">Nucleus</location>
    </subcellularLocation>
    <subcellularLocation>
        <location evidence="7 10 11 13">Chromosome</location>
        <location evidence="7 10 11 13">Centromere</location>
        <location evidence="7 10 11 13">Kinetochore</location>
    </subcellularLocation>
    <subcellularLocation>
        <location evidence="13">Chromosome</location>
        <location evidence="13">Centromere</location>
    </subcellularLocation>
    <text evidence="10 11 13">Recruited to kinetochores and centromeres during the early stages of mitosis when cells start to form a spindle and kinetochores are unattached, when spc7 is phosphorylated by mph1.</text>
</comment>
<comment type="PTM">
    <text evidence="1">Autophosphorylated.</text>
</comment>
<comment type="disruption phenotype">
    <text evidence="10 11 12">Chromosome segregation defects (PubMed:22521786). Sensitive to thiabendazole (TBZ) (PubMed:22660415). Simultaneous disruption of nucleoporin alm1 results in a growth defect (PubMed:28974540).</text>
</comment>
<comment type="similarity">
    <text evidence="4">Belongs to the protein kinase superfamily. Ser/Thr protein kinase family. BUB1 subfamily.</text>
</comment>
<feature type="chain" id="PRO_0000085675" description="Spindle assembly checkpoint serine/threonine-protein kinase bub1">
    <location>
        <begin position="1"/>
        <end position="1044"/>
    </location>
</feature>
<feature type="domain" description="BUB1 N-terminal" evidence="5">
    <location>
        <begin position="36"/>
        <end position="204"/>
    </location>
</feature>
<feature type="domain" description="Protein kinase" evidence="4">
    <location>
        <begin position="718"/>
        <end position="1044"/>
    </location>
</feature>
<feature type="region of interest" description="Disordered" evidence="6">
    <location>
        <begin position="209"/>
        <end position="259"/>
    </location>
</feature>
<feature type="region of interest" description="Disordered" evidence="6">
    <location>
        <begin position="317"/>
        <end position="343"/>
    </location>
</feature>
<feature type="region of interest" description="Disordered" evidence="6">
    <location>
        <begin position="404"/>
        <end position="446"/>
    </location>
</feature>
<feature type="region of interest" description="Disordered" evidence="6">
    <location>
        <begin position="484"/>
        <end position="555"/>
    </location>
</feature>
<feature type="region of interest" description="Disordered" evidence="6">
    <location>
        <begin position="685"/>
        <end position="705"/>
    </location>
</feature>
<feature type="compositionally biased region" description="Polar residues" evidence="6">
    <location>
        <begin position="223"/>
        <end position="239"/>
    </location>
</feature>
<feature type="compositionally biased region" description="Polar residues" evidence="6">
    <location>
        <begin position="430"/>
        <end position="442"/>
    </location>
</feature>
<feature type="compositionally biased region" description="Low complexity" evidence="6">
    <location>
        <begin position="504"/>
        <end position="518"/>
    </location>
</feature>
<feature type="compositionally biased region" description="Polar residues" evidence="6">
    <location>
        <begin position="544"/>
        <end position="555"/>
    </location>
</feature>
<feature type="active site" description="Proton acceptor" evidence="4">
    <location>
        <position position="861"/>
    </location>
</feature>
<feature type="binding site" evidence="2">
    <location>
        <position position="728"/>
    </location>
    <ligand>
        <name>ATP</name>
        <dbReference type="ChEBI" id="CHEBI:30616"/>
    </ligand>
</feature>
<feature type="binding site" evidence="2">
    <location>
        <position position="729"/>
    </location>
    <ligand>
        <name>ATP</name>
        <dbReference type="ChEBI" id="CHEBI:30616"/>
    </ligand>
</feature>
<feature type="binding site" evidence="2">
    <location>
        <position position="730"/>
    </location>
    <ligand>
        <name>ATP</name>
        <dbReference type="ChEBI" id="CHEBI:30616"/>
    </ligand>
</feature>
<feature type="binding site" evidence="4">
    <location>
        <position position="762"/>
    </location>
    <ligand>
        <name>ATP</name>
        <dbReference type="ChEBI" id="CHEBI:30616"/>
    </ligand>
</feature>
<feature type="binding site" evidence="2">
    <location>
        <position position="809"/>
    </location>
    <ligand>
        <name>ATP</name>
        <dbReference type="ChEBI" id="CHEBI:30616"/>
    </ligand>
</feature>
<feature type="binding site" evidence="2">
    <location>
        <position position="865"/>
    </location>
    <ligand>
        <name>ATP</name>
        <dbReference type="ChEBI" id="CHEBI:30616"/>
    </ligand>
</feature>
<feature type="binding site" evidence="2">
    <location>
        <position position="866"/>
    </location>
    <ligand>
        <name>ATP</name>
        <dbReference type="ChEBI" id="CHEBI:30616"/>
    </ligand>
</feature>
<feature type="binding site" evidence="2">
    <location>
        <position position="900"/>
    </location>
    <ligand>
        <name>ATP</name>
        <dbReference type="ChEBI" id="CHEBI:30616"/>
    </ligand>
</feature>
<feature type="modified residue" description="Phosphothreonine" evidence="9">
    <location>
        <position position="550"/>
    </location>
</feature>
<feature type="mutagenesis site" description="Defect in activating the spindle assembly checkpoint. No localization of bub1, bub3 or mad3 to the kinetochore." evidence="8">
    <original>A</original>
    <variation>V</variation>
    <location>
        <position position="78"/>
    </location>
</feature>
<proteinExistence type="evidence at protein level"/>
<organism>
    <name type="scientific">Schizosaccharomyces pombe (strain 972 / ATCC 24843)</name>
    <name type="common">Fission yeast</name>
    <dbReference type="NCBI Taxonomy" id="284812"/>
    <lineage>
        <taxon>Eukaryota</taxon>
        <taxon>Fungi</taxon>
        <taxon>Dikarya</taxon>
        <taxon>Ascomycota</taxon>
        <taxon>Taphrinomycotina</taxon>
        <taxon>Schizosaccharomycetes</taxon>
        <taxon>Schizosaccharomycetales</taxon>
        <taxon>Schizosaccharomycetaceae</taxon>
        <taxon>Schizosaccharomyces</taxon>
    </lineage>
</organism>
<accession>O94751</accession>